<dbReference type="EC" id="2.7.11.1"/>
<dbReference type="EMBL" id="M57977">
    <property type="protein sequence ID" value="AAA48288.1"/>
    <property type="molecule type" value="Genomic_DNA"/>
</dbReference>
<dbReference type="GO" id="GO:0044165">
    <property type="term" value="C:host cell endoplasmic reticulum"/>
    <property type="evidence" value="ECO:0007669"/>
    <property type="project" value="UniProtKB-SubCell"/>
</dbReference>
<dbReference type="GO" id="GO:0044172">
    <property type="term" value="C:host cell endoplasmic reticulum-Golgi intermediate compartment"/>
    <property type="evidence" value="ECO:0007669"/>
    <property type="project" value="UniProtKB-SubCell"/>
</dbReference>
<dbReference type="GO" id="GO:0005524">
    <property type="term" value="F:ATP binding"/>
    <property type="evidence" value="ECO:0007669"/>
    <property type="project" value="UniProtKB-KW"/>
</dbReference>
<dbReference type="GO" id="GO:0106310">
    <property type="term" value="F:protein serine kinase activity"/>
    <property type="evidence" value="ECO:0007669"/>
    <property type="project" value="RHEA"/>
</dbReference>
<dbReference type="GO" id="GO:0004674">
    <property type="term" value="F:protein serine/threonine kinase activity"/>
    <property type="evidence" value="ECO:0007669"/>
    <property type="project" value="UniProtKB-KW"/>
</dbReference>
<dbReference type="InterPro" id="IPR008790">
    <property type="entry name" value="Poxvirus_ser/thr_kinase"/>
</dbReference>
<dbReference type="InterPro" id="IPR000719">
    <property type="entry name" value="Prot_kinase_dom"/>
</dbReference>
<dbReference type="InterPro" id="IPR008271">
    <property type="entry name" value="Ser/Thr_kinase_AS"/>
</dbReference>
<dbReference type="Pfam" id="PF05445">
    <property type="entry name" value="Pox_ser-thr_kin"/>
    <property type="match status" value="1"/>
</dbReference>
<dbReference type="PIRSF" id="PIRSF015695">
    <property type="entry name" value="STPK_F10L"/>
    <property type="match status" value="1"/>
</dbReference>
<dbReference type="PROSITE" id="PS50011">
    <property type="entry name" value="PROTEIN_KINASE_DOM"/>
    <property type="match status" value="1"/>
</dbReference>
<dbReference type="PROSITE" id="PS00108">
    <property type="entry name" value="PROTEIN_KINASE_ST"/>
    <property type="match status" value="1"/>
</dbReference>
<name>VPK2_VACCP</name>
<evidence type="ECO:0000250" key="1">
    <source>
        <dbReference type="UniProtKB" id="Q89121"/>
    </source>
</evidence>
<evidence type="ECO:0000255" key="2">
    <source>
        <dbReference type="PROSITE-ProRule" id="PRU00159"/>
    </source>
</evidence>
<evidence type="ECO:0000255" key="3">
    <source>
        <dbReference type="PROSITE-ProRule" id="PRU10027"/>
    </source>
</evidence>
<proteinExistence type="inferred from homology"/>
<organism>
    <name type="scientific">Vaccinia virus (strain L-IVP)</name>
    <name type="common">VACV</name>
    <dbReference type="NCBI Taxonomy" id="31531"/>
    <lineage>
        <taxon>Viruses</taxon>
        <taxon>Varidnaviria</taxon>
        <taxon>Bamfordvirae</taxon>
        <taxon>Nucleocytoviricota</taxon>
        <taxon>Pokkesviricetes</taxon>
        <taxon>Chitovirales</taxon>
        <taxon>Poxviridae</taxon>
        <taxon>Chordopoxvirinae</taxon>
        <taxon>Orthopoxvirus</taxon>
        <taxon>Vaccinia virus</taxon>
    </lineage>
</organism>
<gene>
    <name type="primary">OPG054</name>
    <name type="synonym">VPK2</name>
    <name type="ORF">F8</name>
</gene>
<keyword id="KW-0067">ATP-binding</keyword>
<keyword id="KW-1038">Host endoplasmic reticulum</keyword>
<keyword id="KW-0418">Kinase</keyword>
<keyword id="KW-0426">Late protein</keyword>
<keyword id="KW-0547">Nucleotide-binding</keyword>
<keyword id="KW-0597">Phosphoprotein</keyword>
<keyword id="KW-0723">Serine/threonine-protein kinase</keyword>
<keyword id="KW-0808">Transferase</keyword>
<sequence length="405" mass="48133">MGVANDSSPEYQWMSPHLNYFKNFNKETLLKIEENDYINSSFFQQKDKRFYPINDDFYHISTGGYGIVFKIDNYVVKFVLEAIKLYSPMEIMAELTVPKFLYNNLKGDEKKLIVCVWAMGLNYKLTFLHTLYKRVLHMLLLLIQTMDGQELSLRYSSKVFLKAFNERKDSIKFVKLLSHFYPAVINSNINVINYFNRMFHFFEHEKGTNYEYERGNIIIFPLTLYSADKVDTELAIKLGFKSLVQYIKFIFLQMALLYIKIYELPCCDNFLHADLKPDNILLFDSNEPIIIHLDKKFVFNERIKSALNDFDFSQVAGIINKKIKNNFKVEHNWYYDFHFFVHTLLKTYPEIEKDIEFSTALEEFIMCTKTDCDKYRLKVSILHPISFLEKFIMRDIFSDWINGGN</sequence>
<reference key="1">
    <citation type="journal article" date="1988" name="Biotekhnologiya">
        <title>Structural-functional organization of segment of vaccinia virus genome.</title>
        <authorList>
            <person name="Mikryukov N.N."/>
            <person name="Chizhikov V.E."/>
            <person name="Prikhod'Ko G.G."/>
            <person name="Urmmanov I.M."/>
            <person name="Serpinskii O.I."/>
            <person name="Blinov V.M."/>
            <person name="Nikulin A.E."/>
            <person name="Vasilenko S.K."/>
        </authorList>
    </citation>
    <scope>NUCLEOTIDE SEQUENCE [GENOMIC DNA]</scope>
</reference>
<accession>P29884</accession>
<protein>
    <recommendedName>
        <fullName>Serine/threonine-protein kinase 2</fullName>
        <ecNumber>2.7.11.1</ecNumber>
    </recommendedName>
    <alternativeName>
        <fullName>Vaccinia protein kinase 2</fullName>
    </alternativeName>
</protein>
<comment type="function">
    <text evidence="1">Essential serine-protein kinase involved in the early stage of virion morphogenesis.</text>
</comment>
<comment type="catalytic activity">
    <reaction>
        <text>L-seryl-[protein] + ATP = O-phospho-L-seryl-[protein] + ADP + H(+)</text>
        <dbReference type="Rhea" id="RHEA:17989"/>
        <dbReference type="Rhea" id="RHEA-COMP:9863"/>
        <dbReference type="Rhea" id="RHEA-COMP:11604"/>
        <dbReference type="ChEBI" id="CHEBI:15378"/>
        <dbReference type="ChEBI" id="CHEBI:29999"/>
        <dbReference type="ChEBI" id="CHEBI:30616"/>
        <dbReference type="ChEBI" id="CHEBI:83421"/>
        <dbReference type="ChEBI" id="CHEBI:456216"/>
        <dbReference type="EC" id="2.7.11.1"/>
    </reaction>
</comment>
<comment type="catalytic activity">
    <reaction>
        <text>L-threonyl-[protein] + ATP = O-phospho-L-threonyl-[protein] + ADP + H(+)</text>
        <dbReference type="Rhea" id="RHEA:46608"/>
        <dbReference type="Rhea" id="RHEA-COMP:11060"/>
        <dbReference type="Rhea" id="RHEA-COMP:11605"/>
        <dbReference type="ChEBI" id="CHEBI:15378"/>
        <dbReference type="ChEBI" id="CHEBI:30013"/>
        <dbReference type="ChEBI" id="CHEBI:30616"/>
        <dbReference type="ChEBI" id="CHEBI:61977"/>
        <dbReference type="ChEBI" id="CHEBI:456216"/>
        <dbReference type="EC" id="2.7.11.1"/>
    </reaction>
</comment>
<comment type="subcellular location">
    <subcellularLocation>
        <location evidence="1">Host endoplasmic reticulum</location>
    </subcellularLocation>
    <subcellularLocation>
        <location evidence="1">Host endoplasmic reticulum-Golgi intermediate compartment</location>
    </subcellularLocation>
</comment>
<comment type="PTM">
    <text evidence="1">Phosphorylated in vivo. Autophosphorylated in vitro.</text>
</comment>
<comment type="similarity">
    <text evidence="2">Belongs to the protein kinase superfamily. Ser/Thr protein kinase family. Poxviruses subfamily.</text>
</comment>
<feature type="chain" id="PRO_0000086797" description="Serine/threonine-protein kinase 2">
    <location>
        <begin position="1"/>
        <end position="405"/>
    </location>
</feature>
<feature type="domain" description="Protein kinase" evidence="2">
    <location>
        <begin position="54"/>
        <end position="405"/>
    </location>
</feature>
<feature type="active site" description="Proton acceptor" evidence="2 3">
    <location>
        <position position="274"/>
    </location>
</feature>
<feature type="binding site" evidence="2">
    <location>
        <begin position="60"/>
        <end position="68"/>
    </location>
    <ligand>
        <name>ATP</name>
        <dbReference type="ChEBI" id="CHEBI:30616"/>
    </ligand>
</feature>
<feature type="binding site" evidence="2">
    <location>
        <position position="84"/>
    </location>
    <ligand>
        <name>ATP</name>
        <dbReference type="ChEBI" id="CHEBI:30616"/>
    </ligand>
</feature>
<organismHost>
    <name type="scientific">Homo sapiens</name>
    <name type="common">Human</name>
    <dbReference type="NCBI Taxonomy" id="9606"/>
</organismHost>